<organism>
    <name type="scientific">Carassius auratus</name>
    <name type="common">Goldfish</name>
    <dbReference type="NCBI Taxonomy" id="7957"/>
    <lineage>
        <taxon>Eukaryota</taxon>
        <taxon>Metazoa</taxon>
        <taxon>Chordata</taxon>
        <taxon>Craniata</taxon>
        <taxon>Vertebrata</taxon>
        <taxon>Euteleostomi</taxon>
        <taxon>Actinopterygii</taxon>
        <taxon>Neopterygii</taxon>
        <taxon>Teleostei</taxon>
        <taxon>Ostariophysi</taxon>
        <taxon>Cypriniformes</taxon>
        <taxon>Cyprinidae</taxon>
        <taxon>Cyprininae</taxon>
        <taxon>Carassius</taxon>
    </lineage>
</organism>
<protein>
    <recommendedName>
        <fullName>Green-sensitive opsin-2</fullName>
    </recommendedName>
    <alternativeName>
        <fullName>Green cone photoreceptor pigment 2</fullName>
    </alternativeName>
</protein>
<proteinExistence type="evidence at protein level"/>
<reference key="1">
    <citation type="journal article" date="1993" name="Biochemistry">
        <title>Cloning and expression of goldfish opsin sequences.</title>
        <authorList>
            <person name="Johnson R.L."/>
            <person name="Grant K.B."/>
            <person name="Zankel T.C."/>
            <person name="Boehm M.F."/>
            <person name="Merbs S.L."/>
            <person name="Nathans J."/>
            <person name="Nakanishi K."/>
        </authorList>
    </citation>
    <scope>NUCLEOTIDE SEQUENCE [MRNA]</scope>
</reference>
<keyword id="KW-0157">Chromophore</keyword>
<keyword id="KW-1015">Disulfide bond</keyword>
<keyword id="KW-0297">G-protein coupled receptor</keyword>
<keyword id="KW-0325">Glycoprotein</keyword>
<keyword id="KW-0472">Membrane</keyword>
<keyword id="KW-0597">Phosphoprotein</keyword>
<keyword id="KW-0600">Photoreceptor protein</keyword>
<keyword id="KW-0675">Receptor</keyword>
<keyword id="KW-1185">Reference proteome</keyword>
<keyword id="KW-0681">Retinal protein</keyword>
<keyword id="KW-0716">Sensory transduction</keyword>
<keyword id="KW-0807">Transducer</keyword>
<keyword id="KW-0812">Transmembrane</keyword>
<keyword id="KW-1133">Transmembrane helix</keyword>
<keyword id="KW-0844">Vision</keyword>
<accession>P32312</accession>
<comment type="function">
    <text>Visual pigments are the light-absorbing molecules that mediate vision. They consist of an apoprotein, opsin, covalently linked to cis-retinal.</text>
</comment>
<comment type="biophysicochemical properties">
    <absorption>
        <max>509 nm</max>
    </absorption>
</comment>
<comment type="subcellular location">
    <subcellularLocation>
        <location>Membrane</location>
        <topology>Multi-pass membrane protein</topology>
    </subcellularLocation>
</comment>
<comment type="tissue specificity">
    <text>The color pigments are found in the cone photoreceptor cells.</text>
</comment>
<comment type="PTM">
    <text>Phosphorylated on some or all of the serine and threonine residues present in the C-terminal region.</text>
</comment>
<comment type="similarity">
    <text evidence="3">Belongs to the G-protein coupled receptor 1 family. Opsin subfamily.</text>
</comment>
<sequence>MNGTEGNNFYVPLSNRTGLVRSPFEYPQYYLAEPWQFKLLAVYMFFLICLGLPINGLTLICTAQHKKLRQPLNFILVNLAVAGAIMVCFGFTVTFYTAINGYFALGPTGCAVEGFMATLGGEVALWSLVVLAIERYIVVCKPMGSFKFSSTHASAGIAFTWVMAMACAAPPLVGWSRYIPEGIQCSCGPDYYTLNPEYNNESYVLYMFICHFILPVTIIFFTYGRLVCTVKAAAAQQQDSASTQKAEREVTKMVILMVLGFLVAWTPYATVAAWIFFNKGAAFSAQFMAIPAFFSKTSALYNPVIYVLLNKQFRSCMLTTLFCGKNPLGDEESSTVSTSKTEVSSVSPA</sequence>
<name>OPSG2_CARAU</name>
<dbReference type="EMBL" id="L11866">
    <property type="protein sequence ID" value="AAA49169.1"/>
    <property type="molecule type" value="mRNA"/>
</dbReference>
<dbReference type="PIR" id="B45229">
    <property type="entry name" value="B45229"/>
</dbReference>
<dbReference type="RefSeq" id="XP_026069166.1">
    <property type="nucleotide sequence ID" value="XM_026213381.1"/>
</dbReference>
<dbReference type="SMR" id="P32312"/>
<dbReference type="GeneID" id="113050437"/>
<dbReference type="OrthoDB" id="5962323at2759"/>
<dbReference type="Proteomes" id="UP000515129">
    <property type="component" value="Chromosome 31"/>
</dbReference>
<dbReference type="GO" id="GO:0016020">
    <property type="term" value="C:membrane"/>
    <property type="evidence" value="ECO:0007669"/>
    <property type="project" value="UniProtKB-SubCell"/>
</dbReference>
<dbReference type="GO" id="GO:0004930">
    <property type="term" value="F:G protein-coupled receptor activity"/>
    <property type="evidence" value="ECO:0007669"/>
    <property type="project" value="UniProtKB-KW"/>
</dbReference>
<dbReference type="GO" id="GO:0009881">
    <property type="term" value="F:photoreceptor activity"/>
    <property type="evidence" value="ECO:0007669"/>
    <property type="project" value="UniProtKB-KW"/>
</dbReference>
<dbReference type="GO" id="GO:0007602">
    <property type="term" value="P:phototransduction"/>
    <property type="evidence" value="ECO:0007669"/>
    <property type="project" value="UniProtKB-KW"/>
</dbReference>
<dbReference type="GO" id="GO:0007601">
    <property type="term" value="P:visual perception"/>
    <property type="evidence" value="ECO:0007669"/>
    <property type="project" value="UniProtKB-KW"/>
</dbReference>
<dbReference type="FunFam" id="1.20.1070.10:FF:000018">
    <property type="entry name" value="Rhodopsin"/>
    <property type="match status" value="1"/>
</dbReference>
<dbReference type="Gene3D" id="1.20.1070.10">
    <property type="entry name" value="Rhodopsin 7-helix transmembrane proteins"/>
    <property type="match status" value="1"/>
</dbReference>
<dbReference type="InterPro" id="IPR050125">
    <property type="entry name" value="GPCR_opsins"/>
</dbReference>
<dbReference type="InterPro" id="IPR000276">
    <property type="entry name" value="GPCR_Rhodpsn"/>
</dbReference>
<dbReference type="InterPro" id="IPR017452">
    <property type="entry name" value="GPCR_Rhodpsn_7TM"/>
</dbReference>
<dbReference type="InterPro" id="IPR001760">
    <property type="entry name" value="Opsin"/>
</dbReference>
<dbReference type="InterPro" id="IPR027430">
    <property type="entry name" value="Retinal_BS"/>
</dbReference>
<dbReference type="InterPro" id="IPR000732">
    <property type="entry name" value="Rhodopsin"/>
</dbReference>
<dbReference type="InterPro" id="IPR019477">
    <property type="entry name" value="Rhodopsin_N"/>
</dbReference>
<dbReference type="PANTHER" id="PTHR24240">
    <property type="entry name" value="OPSIN"/>
    <property type="match status" value="1"/>
</dbReference>
<dbReference type="Pfam" id="PF00001">
    <property type="entry name" value="7tm_1"/>
    <property type="match status" value="1"/>
</dbReference>
<dbReference type="Pfam" id="PF10413">
    <property type="entry name" value="Rhodopsin_N"/>
    <property type="match status" value="1"/>
</dbReference>
<dbReference type="PRINTS" id="PR00237">
    <property type="entry name" value="GPCRRHODOPSN"/>
</dbReference>
<dbReference type="PRINTS" id="PR00238">
    <property type="entry name" value="OPSIN"/>
</dbReference>
<dbReference type="PRINTS" id="PR00579">
    <property type="entry name" value="RHODOPSIN"/>
</dbReference>
<dbReference type="SUPFAM" id="SSF81321">
    <property type="entry name" value="Family A G protein-coupled receptor-like"/>
    <property type="match status" value="1"/>
</dbReference>
<dbReference type="PROSITE" id="PS00237">
    <property type="entry name" value="G_PROTEIN_RECEP_F1_1"/>
    <property type="match status" value="1"/>
</dbReference>
<dbReference type="PROSITE" id="PS50262">
    <property type="entry name" value="G_PROTEIN_RECEP_F1_2"/>
    <property type="match status" value="1"/>
</dbReference>
<dbReference type="PROSITE" id="PS00238">
    <property type="entry name" value="OPSIN"/>
    <property type="match status" value="1"/>
</dbReference>
<feature type="chain" id="PRO_0000197780" description="Green-sensitive opsin-2">
    <location>
        <begin position="1"/>
        <end position="349"/>
    </location>
</feature>
<feature type="topological domain" description="Extracellular" evidence="2">
    <location>
        <begin position="1"/>
        <end position="36"/>
    </location>
</feature>
<feature type="transmembrane region" description="Helical; Name=1" evidence="2">
    <location>
        <begin position="37"/>
        <end position="61"/>
    </location>
</feature>
<feature type="topological domain" description="Cytoplasmic" evidence="2">
    <location>
        <begin position="62"/>
        <end position="73"/>
    </location>
</feature>
<feature type="transmembrane region" description="Helical; Name=2" evidence="2">
    <location>
        <begin position="74"/>
        <end position="99"/>
    </location>
</feature>
<feature type="topological domain" description="Extracellular" evidence="2">
    <location>
        <begin position="100"/>
        <end position="113"/>
    </location>
</feature>
<feature type="transmembrane region" description="Helical; Name=3" evidence="2">
    <location>
        <begin position="114"/>
        <end position="133"/>
    </location>
</feature>
<feature type="topological domain" description="Cytoplasmic" evidence="2">
    <location>
        <begin position="134"/>
        <end position="152"/>
    </location>
</feature>
<feature type="transmembrane region" description="Helical; Name=4" evidence="2">
    <location>
        <begin position="153"/>
        <end position="176"/>
    </location>
</feature>
<feature type="topological domain" description="Extracellular" evidence="2">
    <location>
        <begin position="177"/>
        <end position="202"/>
    </location>
</feature>
<feature type="transmembrane region" description="Helical; Name=5" evidence="2">
    <location>
        <begin position="203"/>
        <end position="230"/>
    </location>
</feature>
<feature type="topological domain" description="Cytoplasmic" evidence="2">
    <location>
        <begin position="231"/>
        <end position="252"/>
    </location>
</feature>
<feature type="transmembrane region" description="Helical; Name=6" evidence="2">
    <location>
        <begin position="253"/>
        <end position="276"/>
    </location>
</feature>
<feature type="topological domain" description="Extracellular" evidence="2">
    <location>
        <begin position="277"/>
        <end position="284"/>
    </location>
</feature>
<feature type="transmembrane region" description="Helical; Name=7" evidence="2">
    <location>
        <begin position="285"/>
        <end position="309"/>
    </location>
</feature>
<feature type="topological domain" description="Cytoplasmic" evidence="2">
    <location>
        <begin position="310"/>
        <end position="349"/>
    </location>
</feature>
<feature type="region of interest" description="Disordered" evidence="4">
    <location>
        <begin position="329"/>
        <end position="349"/>
    </location>
</feature>
<feature type="compositionally biased region" description="Low complexity" evidence="4">
    <location>
        <begin position="334"/>
        <end position="349"/>
    </location>
</feature>
<feature type="modified residue" description="N6-(retinylidene)lysine" evidence="1">
    <location>
        <position position="296"/>
    </location>
</feature>
<feature type="glycosylation site" description="N-linked (GlcNAc...) asparagine" evidence="2">
    <location>
        <position position="2"/>
    </location>
</feature>
<feature type="glycosylation site" description="N-linked (GlcNAc...) asparagine" evidence="2">
    <location>
        <position position="15"/>
    </location>
</feature>
<feature type="disulfide bond" evidence="3">
    <location>
        <begin position="110"/>
        <end position="187"/>
    </location>
</feature>
<evidence type="ECO:0000250" key="1"/>
<evidence type="ECO:0000255" key="2"/>
<evidence type="ECO:0000255" key="3">
    <source>
        <dbReference type="PROSITE-ProRule" id="PRU00521"/>
    </source>
</evidence>
<evidence type="ECO:0000256" key="4">
    <source>
        <dbReference type="SAM" id="MobiDB-lite"/>
    </source>
</evidence>